<feature type="chain" id="PRO_0000383323" description="Heat shock protein homolog SSE1">
    <location>
        <begin position="1"/>
        <end position="658"/>
    </location>
</feature>
<feature type="region of interest" description="Disordered" evidence="2">
    <location>
        <begin position="614"/>
        <end position="658"/>
    </location>
</feature>
<feature type="compositionally biased region" description="Basic and acidic residues" evidence="2">
    <location>
        <begin position="614"/>
        <end position="627"/>
    </location>
</feature>
<feature type="compositionally biased region" description="Acidic residues" evidence="2">
    <location>
        <begin position="642"/>
        <end position="658"/>
    </location>
</feature>
<reference key="1">
    <citation type="journal article" date="2001" name="Nature">
        <title>Genome sequence and gene compaction of the eukaryote parasite Encephalitozoon cuniculi.</title>
        <authorList>
            <person name="Katinka M.D."/>
            <person name="Duprat S."/>
            <person name="Cornillot E."/>
            <person name="Metenier G."/>
            <person name="Thomarat F."/>
            <person name="Prensier G."/>
            <person name="Barbe V."/>
            <person name="Peyretaillade E."/>
            <person name="Brottier P."/>
            <person name="Wincker P."/>
            <person name="Delbac F."/>
            <person name="El Alaoui H."/>
            <person name="Peyret P."/>
            <person name="Saurin W."/>
            <person name="Gouy M."/>
            <person name="Weissenbach J."/>
            <person name="Vivares C.P."/>
        </authorList>
    </citation>
    <scope>NUCLEOTIDE SEQUENCE [LARGE SCALE GENOMIC DNA]</scope>
    <source>
        <strain>GB-M1</strain>
    </source>
</reference>
<reference key="2">
    <citation type="journal article" date="2009" name="BMC Genomics">
        <title>Identification of transcriptional signals in Encephalitozoon cuniculi widespread among Microsporidia phylum: support for accurate structural genome annotation.</title>
        <authorList>
            <person name="Peyretaillade E."/>
            <person name="Goncalves O."/>
            <person name="Terrat S."/>
            <person name="Dugat-Bony E."/>
            <person name="Wincker P."/>
            <person name="Cornman R.S."/>
            <person name="Evans J.D."/>
            <person name="Delbac F."/>
            <person name="Peyret P."/>
        </authorList>
    </citation>
    <scope>GENOME REANNOTATION</scope>
    <source>
        <strain>GB-M1</strain>
    </source>
</reference>
<reference key="3">
    <citation type="journal article" date="2006" name="Proteomics">
        <title>Proteomic analysis of the eukaryotic parasite Encephalitozoon cuniculi (microsporidia): a reference map for proteins expressed in late sporogonial stages.</title>
        <authorList>
            <person name="Brosson D."/>
            <person name="Kuhn L."/>
            <person name="Delbac F."/>
            <person name="Garin J."/>
            <person name="Vivares C.P."/>
            <person name="Texier C."/>
        </authorList>
    </citation>
    <scope>IDENTIFICATION BY MASS SPECTROMETRY [LARGE SCALE ANALYSIS]</scope>
    <scope>DEVELOPMENTAL STAGE</scope>
</reference>
<comment type="function">
    <text evidence="1">Required for normal growth at various temperatures.</text>
</comment>
<comment type="subcellular location">
    <subcellularLocation>
        <location evidence="1">Cytoplasm</location>
    </subcellularLocation>
</comment>
<comment type="developmental stage">
    <text evidence="3">Expressed in late sporogonial stages.</text>
</comment>
<comment type="similarity">
    <text evidence="4">Belongs to the heat shock protein 70 family.</text>
</comment>
<protein>
    <recommendedName>
        <fullName>Heat shock protein homolog SSE1</fullName>
    </recommendedName>
</protein>
<proteinExistence type="evidence at protein level"/>
<keyword id="KW-0067">ATP-binding</keyword>
<keyword id="KW-0112">Calmodulin-binding</keyword>
<keyword id="KW-0143">Chaperone</keyword>
<keyword id="KW-0963">Cytoplasm</keyword>
<keyword id="KW-0547">Nucleotide-binding</keyword>
<keyword id="KW-1185">Reference proteome</keyword>
<keyword id="KW-0346">Stress response</keyword>
<organism>
    <name type="scientific">Encephalitozoon cuniculi (strain GB-M1)</name>
    <name type="common">Microsporidian parasite</name>
    <dbReference type="NCBI Taxonomy" id="284813"/>
    <lineage>
        <taxon>Eukaryota</taxon>
        <taxon>Fungi</taxon>
        <taxon>Fungi incertae sedis</taxon>
        <taxon>Microsporidia</taxon>
        <taxon>Unikaryonidae</taxon>
        <taxon>Encephalitozoon</taxon>
    </lineage>
</organism>
<gene>
    <name type="primary">SSE1</name>
    <name type="ordered locus">ECU11_1830</name>
</gene>
<name>HSP7F_ENCCU</name>
<dbReference type="EMBL" id="AL590450">
    <property type="protein sequence ID" value="CAD26093.2"/>
    <property type="molecule type" value="Genomic_DNA"/>
</dbReference>
<dbReference type="RefSeq" id="NP_586489.1">
    <property type="nucleotide sequence ID" value="NM_001042322.1"/>
</dbReference>
<dbReference type="SMR" id="Q8SQR8"/>
<dbReference type="STRING" id="284813.Q8SQR8"/>
<dbReference type="GeneID" id="860143"/>
<dbReference type="KEGG" id="ecu:ECU11_1830"/>
<dbReference type="VEuPathDB" id="MicrosporidiaDB:ECU11_1830"/>
<dbReference type="HOGENOM" id="CLU_415099_0_0_1"/>
<dbReference type="InParanoid" id="Q8SQR8"/>
<dbReference type="OrthoDB" id="434160at2759"/>
<dbReference type="Proteomes" id="UP000000819">
    <property type="component" value="Chromosome XI"/>
</dbReference>
<dbReference type="GO" id="GO:0034663">
    <property type="term" value="C:endoplasmic reticulum chaperone complex"/>
    <property type="evidence" value="ECO:0007669"/>
    <property type="project" value="TreeGrafter"/>
</dbReference>
<dbReference type="GO" id="GO:0005524">
    <property type="term" value="F:ATP binding"/>
    <property type="evidence" value="ECO:0007669"/>
    <property type="project" value="UniProtKB-KW"/>
</dbReference>
<dbReference type="GO" id="GO:0140662">
    <property type="term" value="F:ATP-dependent protein folding chaperone"/>
    <property type="evidence" value="ECO:0007669"/>
    <property type="project" value="InterPro"/>
</dbReference>
<dbReference type="GO" id="GO:0005516">
    <property type="term" value="F:calmodulin binding"/>
    <property type="evidence" value="ECO:0007669"/>
    <property type="project" value="UniProtKB-KW"/>
</dbReference>
<dbReference type="GO" id="GO:0030968">
    <property type="term" value="P:endoplasmic reticulum unfolded protein response"/>
    <property type="evidence" value="ECO:0007669"/>
    <property type="project" value="TreeGrafter"/>
</dbReference>
<dbReference type="Gene3D" id="3.30.420.40">
    <property type="match status" value="2"/>
</dbReference>
<dbReference type="Gene3D" id="3.90.640.10">
    <property type="entry name" value="Actin, Chain A, domain 4"/>
    <property type="match status" value="1"/>
</dbReference>
<dbReference type="InterPro" id="IPR043129">
    <property type="entry name" value="ATPase_NBD"/>
</dbReference>
<dbReference type="InterPro" id="IPR013126">
    <property type="entry name" value="Hsp_70_fam"/>
</dbReference>
<dbReference type="PANTHER" id="PTHR45639">
    <property type="entry name" value="HSC70CB, ISOFORM G-RELATED"/>
    <property type="match status" value="1"/>
</dbReference>
<dbReference type="PANTHER" id="PTHR45639:SF3">
    <property type="entry name" value="HYPOXIA UP-REGULATED PROTEIN 1"/>
    <property type="match status" value="1"/>
</dbReference>
<dbReference type="Pfam" id="PF00012">
    <property type="entry name" value="HSP70"/>
    <property type="match status" value="1"/>
</dbReference>
<dbReference type="SUPFAM" id="SSF53067">
    <property type="entry name" value="Actin-like ATPase domain"/>
    <property type="match status" value="2"/>
</dbReference>
<accession>Q8SQR8</accession>
<sequence length="658" mass="75189">MEFVGIDIGNYKTVIASSKENGKVYGDEQGKRSIRTVMELSTPVRRFGNGVTNDVEQSLDLRSRSFRDALEDKKGWGNLAMFMKYIDRVVKKNTPTHPPICMAVPAYFKERERRILVDIANTMDFKLEGLITDISAIAMFACVRRENMPSEFLLFDFGFSKTTAGLFSFEKNVLKPLYMKTVRVGSMQFDEKLIDIIVEKHSLEKSRLVREKIKRNLDKIKTTLNSTKCCNIQLFITENPLEVIITQEEYRNAVKSYLSDLDSFVSSVIKETEFNGLVEVVGGNSISFLIKEMLRDKVEYQVTLDVSDSTAIGAALGMACMSLRTRYSLHDIVGREISIRIQGEDVSPTVIFKSTELVEGNPKIVTYNRKESFVLEILEDGEVISTLNVVKGETKETKAIHVSFSIGKFGTVCVNSVECEESVDYEYKPFRISDIDLDDIKALEMKYRDGELGLERIGTMRNELETMAVGLGDALYNKFGKITNDEELNTVREVAMDLFDMPQSETVGQEEEVRNTILSKLEFISKKLSDYRDAAVEDLKKHKDMINEFRKEYGSVFTPSFYKLQGLLYKVDEYLKDFDLNLFNVKLFDESFIMEIKGDIQKYLEKAKLEIEEKRKEEERKSKKENAQEGTSSKPESKEESEAKEDNDEESDVASIDE</sequence>
<evidence type="ECO:0000250" key="1"/>
<evidence type="ECO:0000256" key="2">
    <source>
        <dbReference type="SAM" id="MobiDB-lite"/>
    </source>
</evidence>
<evidence type="ECO:0000269" key="3">
    <source>
    </source>
</evidence>
<evidence type="ECO:0000305" key="4"/>